<evidence type="ECO:0000255" key="1">
    <source>
        <dbReference type="HAMAP-Rule" id="MF_01416"/>
    </source>
</evidence>
<organism>
    <name type="scientific">Jannaschia sp. (strain CCS1)</name>
    <dbReference type="NCBI Taxonomy" id="290400"/>
    <lineage>
        <taxon>Bacteria</taxon>
        <taxon>Pseudomonadati</taxon>
        <taxon>Pseudomonadota</taxon>
        <taxon>Alphaproteobacteria</taxon>
        <taxon>Rhodobacterales</taxon>
        <taxon>Roseobacteraceae</taxon>
        <taxon>Jannaschia</taxon>
    </lineage>
</organism>
<name>ATPD_JANSC</name>
<protein>
    <recommendedName>
        <fullName evidence="1">ATP synthase subunit delta</fullName>
    </recommendedName>
    <alternativeName>
        <fullName evidence="1">ATP synthase F(1) sector subunit delta</fullName>
    </alternativeName>
    <alternativeName>
        <fullName evidence="1">F-type ATPase subunit delta</fullName>
        <shortName evidence="1">F-ATPase subunit delta</shortName>
    </alternativeName>
</protein>
<reference key="1">
    <citation type="submission" date="2006-02" db="EMBL/GenBank/DDBJ databases">
        <title>Complete sequence of chromosome of Jannaschia sp. CCS1.</title>
        <authorList>
            <consortium name="US DOE Joint Genome Institute"/>
            <person name="Copeland A."/>
            <person name="Lucas S."/>
            <person name="Lapidus A."/>
            <person name="Barry K."/>
            <person name="Detter J.C."/>
            <person name="Glavina del Rio T."/>
            <person name="Hammon N."/>
            <person name="Israni S."/>
            <person name="Pitluck S."/>
            <person name="Brettin T."/>
            <person name="Bruce D."/>
            <person name="Han C."/>
            <person name="Tapia R."/>
            <person name="Gilna P."/>
            <person name="Chertkov O."/>
            <person name="Saunders E."/>
            <person name="Schmutz J."/>
            <person name="Larimer F."/>
            <person name="Land M."/>
            <person name="Kyrpides N."/>
            <person name="Lykidis A."/>
            <person name="Moran M.A."/>
            <person name="Belas R."/>
            <person name="Ye W."/>
            <person name="Buchan A."/>
            <person name="Gonzalez J.M."/>
            <person name="Schell M.A."/>
            <person name="Richardson P."/>
        </authorList>
    </citation>
    <scope>NUCLEOTIDE SEQUENCE [LARGE SCALE GENOMIC DNA]</scope>
    <source>
        <strain>CCS1</strain>
    </source>
</reference>
<sequence>MSEPASISTGIAARYATAMFELAEEAKALPALEKDVDALDAALSESADLRDLIHSPIYGRDEASAAIGGVADAMKLQDMTGNTLRLMASKRRLFVLPALLSELRERIADHKGEVTAEVTSAKALTKTQLDKLTKSLKAQVGKTVTVKETVDENIIGGLIVKIGSKMIDTSVRSKLNALQNTMKEVG</sequence>
<gene>
    <name evidence="1" type="primary">atpH</name>
    <name type="ordered locus">Jann_1046</name>
</gene>
<keyword id="KW-0066">ATP synthesis</keyword>
<keyword id="KW-0997">Cell inner membrane</keyword>
<keyword id="KW-1003">Cell membrane</keyword>
<keyword id="KW-0139">CF(1)</keyword>
<keyword id="KW-0375">Hydrogen ion transport</keyword>
<keyword id="KW-0406">Ion transport</keyword>
<keyword id="KW-0472">Membrane</keyword>
<keyword id="KW-1185">Reference proteome</keyword>
<keyword id="KW-0813">Transport</keyword>
<proteinExistence type="inferred from homology"/>
<dbReference type="EMBL" id="CP000264">
    <property type="protein sequence ID" value="ABD53963.1"/>
    <property type="molecule type" value="Genomic_DNA"/>
</dbReference>
<dbReference type="RefSeq" id="WP_011454170.1">
    <property type="nucleotide sequence ID" value="NC_007802.1"/>
</dbReference>
<dbReference type="SMR" id="Q28TJ9"/>
<dbReference type="STRING" id="290400.Jann_1046"/>
<dbReference type="DNASU" id="3933490"/>
<dbReference type="KEGG" id="jan:Jann_1046"/>
<dbReference type="eggNOG" id="COG0712">
    <property type="taxonomic scope" value="Bacteria"/>
</dbReference>
<dbReference type="HOGENOM" id="CLU_085114_0_1_5"/>
<dbReference type="OrthoDB" id="9796185at2"/>
<dbReference type="Proteomes" id="UP000008326">
    <property type="component" value="Chromosome"/>
</dbReference>
<dbReference type="GO" id="GO:0005886">
    <property type="term" value="C:plasma membrane"/>
    <property type="evidence" value="ECO:0007669"/>
    <property type="project" value="UniProtKB-SubCell"/>
</dbReference>
<dbReference type="GO" id="GO:0045259">
    <property type="term" value="C:proton-transporting ATP synthase complex"/>
    <property type="evidence" value="ECO:0007669"/>
    <property type="project" value="UniProtKB-KW"/>
</dbReference>
<dbReference type="GO" id="GO:0046933">
    <property type="term" value="F:proton-transporting ATP synthase activity, rotational mechanism"/>
    <property type="evidence" value="ECO:0007669"/>
    <property type="project" value="UniProtKB-UniRule"/>
</dbReference>
<dbReference type="Gene3D" id="1.10.520.20">
    <property type="entry name" value="N-terminal domain of the delta subunit of the F1F0-ATP synthase"/>
    <property type="match status" value="1"/>
</dbReference>
<dbReference type="HAMAP" id="MF_01416">
    <property type="entry name" value="ATP_synth_delta_bact"/>
    <property type="match status" value="1"/>
</dbReference>
<dbReference type="InterPro" id="IPR026015">
    <property type="entry name" value="ATP_synth_OSCP/delta_N_sf"/>
</dbReference>
<dbReference type="InterPro" id="IPR020781">
    <property type="entry name" value="ATPase_OSCP/d_CS"/>
</dbReference>
<dbReference type="InterPro" id="IPR000711">
    <property type="entry name" value="ATPase_OSCP/dsu"/>
</dbReference>
<dbReference type="NCBIfam" id="TIGR01145">
    <property type="entry name" value="ATP_synt_delta"/>
    <property type="match status" value="1"/>
</dbReference>
<dbReference type="NCBIfam" id="NF004402">
    <property type="entry name" value="PRK05758.2-2"/>
    <property type="match status" value="1"/>
</dbReference>
<dbReference type="NCBIfam" id="NF004406">
    <property type="entry name" value="PRK05758.3-2"/>
    <property type="match status" value="1"/>
</dbReference>
<dbReference type="PANTHER" id="PTHR11910">
    <property type="entry name" value="ATP SYNTHASE DELTA CHAIN"/>
    <property type="match status" value="1"/>
</dbReference>
<dbReference type="Pfam" id="PF00213">
    <property type="entry name" value="OSCP"/>
    <property type="match status" value="1"/>
</dbReference>
<dbReference type="PRINTS" id="PR00125">
    <property type="entry name" value="ATPASEDELTA"/>
</dbReference>
<dbReference type="SUPFAM" id="SSF47928">
    <property type="entry name" value="N-terminal domain of the delta subunit of the F1F0-ATP synthase"/>
    <property type="match status" value="1"/>
</dbReference>
<dbReference type="PROSITE" id="PS00389">
    <property type="entry name" value="ATPASE_DELTA"/>
    <property type="match status" value="1"/>
</dbReference>
<comment type="function">
    <text evidence="1">F(1)F(0) ATP synthase produces ATP from ADP in the presence of a proton or sodium gradient. F-type ATPases consist of two structural domains, F(1) containing the extramembraneous catalytic core and F(0) containing the membrane proton channel, linked together by a central stalk and a peripheral stalk. During catalysis, ATP synthesis in the catalytic domain of F(1) is coupled via a rotary mechanism of the central stalk subunits to proton translocation.</text>
</comment>
<comment type="function">
    <text evidence="1">This protein is part of the stalk that links CF(0) to CF(1). It either transmits conformational changes from CF(0) to CF(1) or is implicated in proton conduction.</text>
</comment>
<comment type="subunit">
    <text evidence="1">F-type ATPases have 2 components, F(1) - the catalytic core - and F(0) - the membrane proton channel. F(1) has five subunits: alpha(3), beta(3), gamma(1), delta(1), epsilon(1). CF(0) has four main subunits: a(1), b(1), b'(1) and c(10-14). The alpha and beta chains form an alternating ring which encloses part of the gamma chain. F(1) is attached to F(0) by a central stalk formed by the gamma and epsilon chains, while a peripheral stalk is formed by the delta, b and b' chains.</text>
</comment>
<comment type="subcellular location">
    <subcellularLocation>
        <location evidence="1">Cell inner membrane</location>
        <topology evidence="1">Peripheral membrane protein</topology>
    </subcellularLocation>
</comment>
<comment type="similarity">
    <text evidence="1">Belongs to the ATPase delta chain family.</text>
</comment>
<feature type="chain" id="PRO_0000371002" description="ATP synthase subunit delta">
    <location>
        <begin position="1"/>
        <end position="186"/>
    </location>
</feature>
<accession>Q28TJ9</accession>